<gene>
    <name evidence="8" type="primary">WRKY24</name>
    <name evidence="11" type="ordered locus">Os01g0826400</name>
    <name evidence="13" type="ORF">OsJ_03928</name>
    <name evidence="12" type="ORF">OSNPB_010826400</name>
</gene>
<reference key="1">
    <citation type="submission" date="2003-07" db="EMBL/GenBank/DDBJ databases">
        <title>Isolation of rice WRKY protein through W-box bait vector by modified yeast one-hybrid system method.</title>
        <authorList>
            <person name="Yao Q."/>
            <person name="Peng R."/>
            <person name="Xiong A."/>
        </authorList>
    </citation>
    <scope>NUCLEOTIDE SEQUENCE [MRNA] (ISOFORM 2)</scope>
</reference>
<reference key="2">
    <citation type="journal article" date="2004" name="Chin. Sci. Bull.">
        <title>Cloning and analysis of expression profile of 13 WRKY genes in rice.</title>
        <authorList>
            <person name="Qiu Y."/>
            <person name="Jing S."/>
            <person name="Fu J."/>
            <person name="Li L."/>
            <person name="Yu D."/>
        </authorList>
    </citation>
    <scope>NUCLEOTIDE SEQUENCE [MRNA] (ISOFORM 1)</scope>
</reference>
<reference key="3">
    <citation type="journal article" date="2004" name="Plant Physiol.">
        <title>A rice WRKY gene encodes a transcriptional repressor of the gibberellin signaling pathway in aleurone cells.</title>
        <authorList>
            <person name="Zhang Z.-L."/>
            <person name="Xie Z."/>
            <person name="Zou X."/>
            <person name="Casaretto J."/>
            <person name="Ho T.-H.D."/>
            <person name="Shen Q.J."/>
        </authorList>
    </citation>
    <scope>NUCLEOTIDE SEQUENCE [GENOMIC DNA] (ISOFORM 1)</scope>
    <source>
        <strain>cv. Nipponbare</strain>
    </source>
</reference>
<reference key="4">
    <citation type="journal article" date="2002" name="Nature">
        <title>The genome sequence and structure of rice chromosome 1.</title>
        <authorList>
            <person name="Sasaki T."/>
            <person name="Matsumoto T."/>
            <person name="Yamamoto K."/>
            <person name="Sakata K."/>
            <person name="Baba T."/>
            <person name="Katayose Y."/>
            <person name="Wu J."/>
            <person name="Niimura Y."/>
            <person name="Cheng Z."/>
            <person name="Nagamura Y."/>
            <person name="Antonio B.A."/>
            <person name="Kanamori H."/>
            <person name="Hosokawa S."/>
            <person name="Masukawa M."/>
            <person name="Arikawa K."/>
            <person name="Chiden Y."/>
            <person name="Hayashi M."/>
            <person name="Okamoto M."/>
            <person name="Ando T."/>
            <person name="Aoki H."/>
            <person name="Arita K."/>
            <person name="Hamada M."/>
            <person name="Harada C."/>
            <person name="Hijishita S."/>
            <person name="Honda M."/>
            <person name="Ichikawa Y."/>
            <person name="Idonuma A."/>
            <person name="Iijima M."/>
            <person name="Ikeda M."/>
            <person name="Ikeno M."/>
            <person name="Ito S."/>
            <person name="Ito T."/>
            <person name="Ito Y."/>
            <person name="Ito Y."/>
            <person name="Iwabuchi A."/>
            <person name="Kamiya K."/>
            <person name="Karasawa W."/>
            <person name="Katagiri S."/>
            <person name="Kikuta A."/>
            <person name="Kobayashi N."/>
            <person name="Kono I."/>
            <person name="Machita K."/>
            <person name="Maehara T."/>
            <person name="Mizuno H."/>
            <person name="Mizubayashi T."/>
            <person name="Mukai Y."/>
            <person name="Nagasaki H."/>
            <person name="Nakashima M."/>
            <person name="Nakama Y."/>
            <person name="Nakamichi Y."/>
            <person name="Nakamura M."/>
            <person name="Namiki N."/>
            <person name="Negishi M."/>
            <person name="Ohta I."/>
            <person name="Ono N."/>
            <person name="Saji S."/>
            <person name="Sakai K."/>
            <person name="Shibata M."/>
            <person name="Shimokawa T."/>
            <person name="Shomura A."/>
            <person name="Song J."/>
            <person name="Takazaki Y."/>
            <person name="Terasawa K."/>
            <person name="Tsuji K."/>
            <person name="Waki K."/>
            <person name="Yamagata H."/>
            <person name="Yamane H."/>
            <person name="Yoshiki S."/>
            <person name="Yoshihara R."/>
            <person name="Yukawa K."/>
            <person name="Zhong H."/>
            <person name="Iwama H."/>
            <person name="Endo T."/>
            <person name="Ito H."/>
            <person name="Hahn J.H."/>
            <person name="Kim H.-I."/>
            <person name="Eun M.-Y."/>
            <person name="Yano M."/>
            <person name="Jiang J."/>
            <person name="Gojobori T."/>
        </authorList>
    </citation>
    <scope>NUCLEOTIDE SEQUENCE [LARGE SCALE GENOMIC DNA]</scope>
    <source>
        <strain>cv. Nipponbare</strain>
    </source>
</reference>
<reference key="5">
    <citation type="journal article" date="2005" name="Nature">
        <title>The map-based sequence of the rice genome.</title>
        <authorList>
            <consortium name="International rice genome sequencing project (IRGSP)"/>
        </authorList>
    </citation>
    <scope>NUCLEOTIDE SEQUENCE [LARGE SCALE GENOMIC DNA]</scope>
    <source>
        <strain>cv. Nipponbare</strain>
    </source>
</reference>
<reference key="6">
    <citation type="journal article" date="2008" name="Nucleic Acids Res.">
        <title>The rice annotation project database (RAP-DB): 2008 update.</title>
        <authorList>
            <consortium name="The rice annotation project (RAP)"/>
        </authorList>
    </citation>
    <scope>GENOME REANNOTATION</scope>
    <source>
        <strain>cv. Nipponbare</strain>
    </source>
</reference>
<reference key="7">
    <citation type="journal article" date="2013" name="Rice">
        <title>Improvement of the Oryza sativa Nipponbare reference genome using next generation sequence and optical map data.</title>
        <authorList>
            <person name="Kawahara Y."/>
            <person name="de la Bastide M."/>
            <person name="Hamilton J.P."/>
            <person name="Kanamori H."/>
            <person name="McCombie W.R."/>
            <person name="Ouyang S."/>
            <person name="Schwartz D.C."/>
            <person name="Tanaka T."/>
            <person name="Wu J."/>
            <person name="Zhou S."/>
            <person name="Childs K.L."/>
            <person name="Davidson R.M."/>
            <person name="Lin H."/>
            <person name="Quesada-Ocampo L."/>
            <person name="Vaillancourt B."/>
            <person name="Sakai H."/>
            <person name="Lee S.S."/>
            <person name="Kim J."/>
            <person name="Numa H."/>
            <person name="Itoh T."/>
            <person name="Buell C.R."/>
            <person name="Matsumoto T."/>
        </authorList>
    </citation>
    <scope>GENOME REANNOTATION</scope>
    <source>
        <strain>cv. Nipponbare</strain>
    </source>
</reference>
<reference key="8">
    <citation type="journal article" date="2005" name="PLoS Biol.">
        <title>The genomes of Oryza sativa: a history of duplications.</title>
        <authorList>
            <person name="Yu J."/>
            <person name="Wang J."/>
            <person name="Lin W."/>
            <person name="Li S."/>
            <person name="Li H."/>
            <person name="Zhou J."/>
            <person name="Ni P."/>
            <person name="Dong W."/>
            <person name="Hu S."/>
            <person name="Zeng C."/>
            <person name="Zhang J."/>
            <person name="Zhang Y."/>
            <person name="Li R."/>
            <person name="Xu Z."/>
            <person name="Li S."/>
            <person name="Li X."/>
            <person name="Zheng H."/>
            <person name="Cong L."/>
            <person name="Lin L."/>
            <person name="Yin J."/>
            <person name="Geng J."/>
            <person name="Li G."/>
            <person name="Shi J."/>
            <person name="Liu J."/>
            <person name="Lv H."/>
            <person name="Li J."/>
            <person name="Wang J."/>
            <person name="Deng Y."/>
            <person name="Ran L."/>
            <person name="Shi X."/>
            <person name="Wang X."/>
            <person name="Wu Q."/>
            <person name="Li C."/>
            <person name="Ren X."/>
            <person name="Wang J."/>
            <person name="Wang X."/>
            <person name="Li D."/>
            <person name="Liu D."/>
            <person name="Zhang X."/>
            <person name="Ji Z."/>
            <person name="Zhao W."/>
            <person name="Sun Y."/>
            <person name="Zhang Z."/>
            <person name="Bao J."/>
            <person name="Han Y."/>
            <person name="Dong L."/>
            <person name="Ji J."/>
            <person name="Chen P."/>
            <person name="Wu S."/>
            <person name="Liu J."/>
            <person name="Xiao Y."/>
            <person name="Bu D."/>
            <person name="Tan J."/>
            <person name="Yang L."/>
            <person name="Ye C."/>
            <person name="Zhang J."/>
            <person name="Xu J."/>
            <person name="Zhou Y."/>
            <person name="Yu Y."/>
            <person name="Zhang B."/>
            <person name="Zhuang S."/>
            <person name="Wei H."/>
            <person name="Liu B."/>
            <person name="Lei M."/>
            <person name="Yu H."/>
            <person name="Li Y."/>
            <person name="Xu H."/>
            <person name="Wei S."/>
            <person name="He X."/>
            <person name="Fang L."/>
            <person name="Zhang Z."/>
            <person name="Zhang Y."/>
            <person name="Huang X."/>
            <person name="Su Z."/>
            <person name="Tong W."/>
            <person name="Li J."/>
            <person name="Tong Z."/>
            <person name="Li S."/>
            <person name="Ye J."/>
            <person name="Wang L."/>
            <person name="Fang L."/>
            <person name="Lei T."/>
            <person name="Chen C.-S."/>
            <person name="Chen H.-C."/>
            <person name="Xu Z."/>
            <person name="Li H."/>
            <person name="Huang H."/>
            <person name="Zhang F."/>
            <person name="Xu H."/>
            <person name="Li N."/>
            <person name="Zhao C."/>
            <person name="Li S."/>
            <person name="Dong L."/>
            <person name="Huang Y."/>
            <person name="Li L."/>
            <person name="Xi Y."/>
            <person name="Qi Q."/>
            <person name="Li W."/>
            <person name="Zhang B."/>
            <person name="Hu W."/>
            <person name="Zhang Y."/>
            <person name="Tian X."/>
            <person name="Jiao Y."/>
            <person name="Liang X."/>
            <person name="Jin J."/>
            <person name="Gao L."/>
            <person name="Zheng W."/>
            <person name="Hao B."/>
            <person name="Liu S.-M."/>
            <person name="Wang W."/>
            <person name="Yuan L."/>
            <person name="Cao M."/>
            <person name="McDermott J."/>
            <person name="Samudrala R."/>
            <person name="Wang J."/>
            <person name="Wong G.K.-S."/>
            <person name="Yang H."/>
        </authorList>
    </citation>
    <scope>NUCLEOTIDE SEQUENCE [LARGE SCALE GENOMIC DNA]</scope>
    <source>
        <strain>cv. Nipponbare</strain>
    </source>
</reference>
<reference key="9">
    <citation type="journal article" date="2003" name="Science">
        <title>Collection, mapping, and annotation of over 28,000 cDNA clones from japonica rice.</title>
        <authorList>
            <consortium name="The rice full-length cDNA consortium"/>
        </authorList>
    </citation>
    <scope>NUCLEOTIDE SEQUENCE [LARGE SCALE MRNA] (ISOFORM 1)</scope>
    <source>
        <strain>cv. Nipponbare</strain>
    </source>
</reference>
<reference key="10">
    <citation type="journal article" date="2005" name="Plant Physiol.">
        <title>Annotations and functional analyses of the rice WRKY gene superfamily reveal positive and negative regulators of abscisic acid signaling in aleurone cells.</title>
        <authorList>
            <person name="Xie Z."/>
            <person name="Zhang Z.-L."/>
            <person name="Zou X."/>
            <person name="Huang J."/>
            <person name="Ruas P."/>
            <person name="Thompson D."/>
            <person name="Shen Q.J."/>
        </authorList>
    </citation>
    <scope>FUNCTION</scope>
    <scope>INDUCTION BY ABSCISIC ACID AND GIBBERELLIC ACID</scope>
    <scope>TISSUE SPECIFICITY</scope>
    <scope>GENE FAMILY</scope>
    <scope>NOMENCLATURE</scope>
</reference>
<reference key="11">
    <citation type="journal article" date="2009" name="Plant Mol. Biol.">
        <title>A negative regulator encoded by a rice WRKY gene represses both abscisic acid and gibberellins signaling in aleurone cells.</title>
        <authorList>
            <person name="Zhang Z.L."/>
            <person name="Shin M."/>
            <person name="Zou X."/>
            <person name="Huang J."/>
            <person name="Ho T.H."/>
            <person name="Shen Q.J."/>
        </authorList>
    </citation>
    <scope>FUNCTION</scope>
    <scope>DEVELOPMENTAL STAGE</scope>
    <scope>INDUCTION BY ABSCISIC ACID</scope>
    <scope>SUBCELLULAR LOCATION</scope>
    <source>
        <strain>cv. M-104</strain>
        <strain>cv. Tainung 67</strain>
    </source>
</reference>
<reference key="12">
    <citation type="journal article" date="2015" name="Plant Sci.">
        <title>Three WRKY transcription factors additively repress abscisic acid and gibberellin signaling in aleurone cells.</title>
        <authorList>
            <person name="Zhang L."/>
            <person name="Gu L."/>
            <person name="Ringler P."/>
            <person name="Smith S."/>
            <person name="Rushton P.J."/>
            <person name="Shen Q.J."/>
        </authorList>
    </citation>
    <scope>FUNCTION</scope>
    <scope>TISSUE SPECIFICITY</scope>
    <source>
        <strain>cv. Nipponbare</strain>
    </source>
</reference>
<sequence length="555" mass="59306">MTTSSSGSVETSANSRLGTFSFASASFTDLLGGNAGAGGGGVSRYKAMTPPSLPLSPPPVSPSSFFNSPIGMNQADFLGSPVLLTSSIFPSPTTGAFASQHFDWRPEVAAAQSADQGGKDEQRNSYSDFSFQTAPASEEAVRTTTFQPPVPPAPLGDEAYRSQQQQQPWGYQQQPAGMDAGANAASFGAAPFQATSSEMAPQVQGGGGYSQPQSQRRSSDDGYNWRKYGQKQVKGSENPRSYYKCTFPNCPTKKKVERSLDGQITEIVYKGTHNHAKPQNTRRNSGSSAAQVLQSGGDMSEHSFGGMSGTAATPENSSASFGDDEIRVGSPRAGNGGGDEFDDDEPDSKRWRKDGDGEGISMAGNRTVREPRVVVQTMSDIDILDDGYRWRKYGQKVVKGNPNPRSYYKCTTAGCPVRKHVERASHDLRAVITTYEGKHNHDVPAARGSAALYRPAPPAAAATSSHPYLPNQPPPMSYQPTGPQPYALRPDGFGGQGPFGGVVGGSSFGGFSGFDDARGSYMSQHQQQQRQNDAMHASRAKEEPGDDMFFQNSLY</sequence>
<feature type="chain" id="PRO_0000436950" description="WRKY transcription factor WRKY24">
    <location>
        <begin position="1"/>
        <end position="555"/>
    </location>
</feature>
<feature type="DNA-binding region" description="WRKY 1" evidence="3">
    <location>
        <begin position="214"/>
        <end position="278"/>
    </location>
</feature>
<feature type="DNA-binding region" description="WRKY 2" evidence="3">
    <location>
        <begin position="379"/>
        <end position="444"/>
    </location>
</feature>
<feature type="region of interest" description="Disordered" evidence="4">
    <location>
        <begin position="133"/>
        <end position="183"/>
    </location>
</feature>
<feature type="region of interest" description="Disordered" evidence="4">
    <location>
        <begin position="197"/>
        <end position="248"/>
    </location>
</feature>
<feature type="region of interest" description="Disordered" evidence="4">
    <location>
        <begin position="270"/>
        <end position="365"/>
    </location>
</feature>
<feature type="region of interest" description="Transcription repression of gibberellic acid (GA)-induced promoters" evidence="2">
    <location>
        <begin position="466"/>
        <end position="555"/>
    </location>
</feature>
<feature type="region of interest" description="Disordered" evidence="4">
    <location>
        <begin position="514"/>
        <end position="555"/>
    </location>
</feature>
<feature type="short sequence motif" description="Nuclear localization signal" evidence="9">
    <location>
        <begin position="253"/>
        <end position="259"/>
    </location>
</feature>
<feature type="compositionally biased region" description="Low complexity" evidence="4">
    <location>
        <begin position="163"/>
        <end position="183"/>
    </location>
</feature>
<feature type="compositionally biased region" description="Polar residues" evidence="4">
    <location>
        <begin position="277"/>
        <end position="294"/>
    </location>
</feature>
<feature type="compositionally biased region" description="Polar residues" evidence="4">
    <location>
        <begin position="310"/>
        <end position="320"/>
    </location>
</feature>
<feature type="compositionally biased region" description="Basic and acidic residues" evidence="4">
    <location>
        <begin position="347"/>
        <end position="356"/>
    </location>
</feature>
<feature type="splice variant" id="VSP_058455" description="In isoform 2.">
    <location>
        <begin position="1"/>
        <end position="198"/>
    </location>
</feature>
<protein>
    <recommendedName>
        <fullName evidence="8">WRKY transcription factor WRKY24</fullName>
        <shortName evidence="8">OsWRKY24</shortName>
    </recommendedName>
</protein>
<proteinExistence type="evidence at transcript level"/>
<keyword id="KW-0938">Abscisic acid signaling pathway</keyword>
<keyword id="KW-0010">Activator</keyword>
<keyword id="KW-0025">Alternative splicing</keyword>
<keyword id="KW-0238">DNA-binding</keyword>
<keyword id="KW-0939">Gibberellin signaling pathway</keyword>
<keyword id="KW-0539">Nucleus</keyword>
<keyword id="KW-1185">Reference proteome</keyword>
<keyword id="KW-0677">Repeat</keyword>
<keyword id="KW-0804">Transcription</keyword>
<keyword id="KW-0805">Transcription regulation</keyword>
<comment type="function">
    <text evidence="5 6 7">Transcription activator (PubMed:26025535). Interacts specifically with the W box (5'-(T)TGAC[CT]-3'), a frequently occurring elicitor-responsive cis-acting element (PubMed:19199048, PubMed:26025535). Negative regulator of both gibberellic acid (GA) and abscisic acid (ABA) signaling in aleurone cells, probably by interfering with GAM1, via the specific repression of GA- and ABA-induced promoters (PubMed:15618416, PubMed:19199048, PubMed:26025535).</text>
</comment>
<comment type="subcellular location">
    <subcellularLocation>
        <location evidence="3 6">Nucleus</location>
    </subcellularLocation>
</comment>
<comment type="alternative products">
    <event type="alternative splicing"/>
    <isoform>
        <id>Q6IEQ7-1</id>
        <name>1</name>
        <sequence type="displayed"/>
    </isoform>
    <isoform>
        <id>Q6IEQ7-2</id>
        <name>2</name>
        <sequence type="described" ref="VSP_058455"/>
    </isoform>
</comment>
<comment type="tissue specificity">
    <text evidence="5 7">Expressed in aleurone cells (PubMed:15618416). Mostly expressed in aleurone layers and leaves, and, to a lower extent, in roots, panicles and embryos (PubMed:26025535).</text>
</comment>
<comment type="developmental stage">
    <text evidence="6">In dry seeds, expressed in aleurone cells and embryos. Levels drop rapidly but transiently in the embryos of imbibed seeds.</text>
</comment>
<comment type="induction">
    <text evidence="1 5 6">Induced by abscisic acid (ABA) in aleurone cells, embryos, roots and leaves (PubMed:15618416, PubMed:19199048). Slightly down-regulated by gibberellic acid (GA) (PubMed:15618416). Accumulates in response to jasmonic acid (MeJA) (By similarity).</text>
</comment>
<comment type="domain">
    <text evidence="2">The WRKY domain is required to bind DNA.</text>
</comment>
<comment type="similarity">
    <text evidence="10">Belongs to the WRKY group II-a family.</text>
</comment>
<name>WRK24_ORYSJ</name>
<accession>Q6IEQ7</accession>
<accession>Q7XAA7</accession>
<accession>Q94D89</accession>
<organism>
    <name type="scientific">Oryza sativa subsp. japonica</name>
    <name type="common">Rice</name>
    <dbReference type="NCBI Taxonomy" id="39947"/>
    <lineage>
        <taxon>Eukaryota</taxon>
        <taxon>Viridiplantae</taxon>
        <taxon>Streptophyta</taxon>
        <taxon>Embryophyta</taxon>
        <taxon>Tracheophyta</taxon>
        <taxon>Spermatophyta</taxon>
        <taxon>Magnoliopsida</taxon>
        <taxon>Liliopsida</taxon>
        <taxon>Poales</taxon>
        <taxon>Poaceae</taxon>
        <taxon>BOP clade</taxon>
        <taxon>Oryzoideae</taxon>
        <taxon>Oryzeae</taxon>
        <taxon>Oryzinae</taxon>
        <taxon>Oryza</taxon>
        <taxon>Oryza sativa</taxon>
    </lineage>
</organism>
<evidence type="ECO:0000250" key="1">
    <source>
        <dbReference type="UniProtKB" id="Q6B6R4"/>
    </source>
</evidence>
<evidence type="ECO:0000250" key="2">
    <source>
        <dbReference type="UniProtKB" id="Q6QHD1"/>
    </source>
</evidence>
<evidence type="ECO:0000255" key="3">
    <source>
        <dbReference type="PROSITE-ProRule" id="PRU00223"/>
    </source>
</evidence>
<evidence type="ECO:0000256" key="4">
    <source>
        <dbReference type="SAM" id="MobiDB-lite"/>
    </source>
</evidence>
<evidence type="ECO:0000269" key="5">
    <source>
    </source>
</evidence>
<evidence type="ECO:0000269" key="6">
    <source>
    </source>
</evidence>
<evidence type="ECO:0000269" key="7">
    <source>
    </source>
</evidence>
<evidence type="ECO:0000303" key="8">
    <source>
    </source>
</evidence>
<evidence type="ECO:0000303" key="9">
    <source>
    </source>
</evidence>
<evidence type="ECO:0000305" key="10"/>
<evidence type="ECO:0000312" key="11">
    <source>
        <dbReference type="EMBL" id="BAF06589.1"/>
    </source>
</evidence>
<evidence type="ECO:0000312" key="12">
    <source>
        <dbReference type="EMBL" id="BAS75019.1"/>
    </source>
</evidence>
<evidence type="ECO:0000312" key="13">
    <source>
        <dbReference type="EMBL" id="EAZ14002.1"/>
    </source>
</evidence>
<dbReference type="EMBL" id="AY341849">
    <property type="protein sequence ID" value="AAQ20908.1"/>
    <property type="molecule type" value="mRNA"/>
</dbReference>
<dbReference type="EMBL" id="AY870608">
    <property type="protein sequence ID" value="AAW63717.1"/>
    <property type="molecule type" value="mRNA"/>
</dbReference>
<dbReference type="EMBL" id="BK005027">
    <property type="protein sequence ID" value="DAA05089.1"/>
    <property type="molecule type" value="Genomic_DNA"/>
</dbReference>
<dbReference type="EMBL" id="AP003315">
    <property type="protein sequence ID" value="BAB61266.1"/>
    <property type="molecule type" value="Genomic_DNA"/>
</dbReference>
<dbReference type="EMBL" id="AP008207">
    <property type="protein sequence ID" value="BAF06589.1"/>
    <property type="molecule type" value="Genomic_DNA"/>
</dbReference>
<dbReference type="EMBL" id="AP014957">
    <property type="protein sequence ID" value="BAS75019.1"/>
    <property type="molecule type" value="Genomic_DNA"/>
</dbReference>
<dbReference type="EMBL" id="CM000138">
    <property type="protein sequence ID" value="EAZ14002.1"/>
    <property type="molecule type" value="Genomic_DNA"/>
</dbReference>
<dbReference type="EMBL" id="AK107199">
    <property type="protein sequence ID" value="BAG97993.1"/>
    <property type="molecule type" value="mRNA"/>
</dbReference>
<dbReference type="RefSeq" id="XP_015619871.1">
    <property type="nucleotide sequence ID" value="XM_015764385.1"/>
</dbReference>
<dbReference type="SMR" id="Q6IEQ7"/>
<dbReference type="FunCoup" id="Q6IEQ7">
    <property type="interactions" value="576"/>
</dbReference>
<dbReference type="STRING" id="39947.Q6IEQ7"/>
<dbReference type="PaxDb" id="39947-Q6IEQ7"/>
<dbReference type="EnsemblPlants" id="Os01t0826400-01">
    <molecule id="Q6IEQ7-1"/>
    <property type="protein sequence ID" value="Os01t0826400-01"/>
    <property type="gene ID" value="Os01g0826400"/>
</dbReference>
<dbReference type="Gramene" id="Os01t0826400-01">
    <molecule id="Q6IEQ7-1"/>
    <property type="protein sequence ID" value="Os01t0826400-01"/>
    <property type="gene ID" value="Os01g0826400"/>
</dbReference>
<dbReference type="KEGG" id="dosa:Os01g0826400"/>
<dbReference type="eggNOG" id="ENOG502QRXJ">
    <property type="taxonomic scope" value="Eukaryota"/>
</dbReference>
<dbReference type="HOGENOM" id="CLU_012086_5_0_1"/>
<dbReference type="InParanoid" id="Q6IEQ7"/>
<dbReference type="OMA" id="REDMFFP"/>
<dbReference type="OrthoDB" id="5065855at2759"/>
<dbReference type="PlantReactome" id="R-OSA-6787011">
    <property type="pathway name" value="Jasmonic acid signaling"/>
</dbReference>
<dbReference type="PlantReactome" id="R-OSA-9826782">
    <property type="pathway name" value="Regulation of seed germination and coleoptile growth under submergence and normal gravity environment"/>
</dbReference>
<dbReference type="Proteomes" id="UP000000763">
    <property type="component" value="Chromosome 1"/>
</dbReference>
<dbReference type="Proteomes" id="UP000007752">
    <property type="component" value="Chromosome 1"/>
</dbReference>
<dbReference type="Proteomes" id="UP000059680">
    <property type="component" value="Chromosome 1"/>
</dbReference>
<dbReference type="GO" id="GO:0005634">
    <property type="term" value="C:nucleus"/>
    <property type="evidence" value="ECO:0000314"/>
    <property type="project" value="UniProtKB"/>
</dbReference>
<dbReference type="GO" id="GO:0003700">
    <property type="term" value="F:DNA-binding transcription factor activity"/>
    <property type="evidence" value="ECO:0007669"/>
    <property type="project" value="InterPro"/>
</dbReference>
<dbReference type="GO" id="GO:0043565">
    <property type="term" value="F:sequence-specific DNA binding"/>
    <property type="evidence" value="ECO:0007669"/>
    <property type="project" value="InterPro"/>
</dbReference>
<dbReference type="GO" id="GO:0009738">
    <property type="term" value="P:abscisic acid-activated signaling pathway"/>
    <property type="evidence" value="ECO:0007669"/>
    <property type="project" value="UniProtKB-KW"/>
</dbReference>
<dbReference type="GO" id="GO:0009740">
    <property type="term" value="P:gibberellic acid mediated signaling pathway"/>
    <property type="evidence" value="ECO:0007669"/>
    <property type="project" value="UniProtKB-KW"/>
</dbReference>
<dbReference type="GO" id="GO:0009788">
    <property type="term" value="P:negative regulation of abscisic acid-activated signaling pathway"/>
    <property type="evidence" value="ECO:0000315"/>
    <property type="project" value="UniProtKB"/>
</dbReference>
<dbReference type="GO" id="GO:0009938">
    <property type="term" value="P:negative regulation of gibberellic acid mediated signaling pathway"/>
    <property type="evidence" value="ECO:0000315"/>
    <property type="project" value="UniProtKB"/>
</dbReference>
<dbReference type="GO" id="GO:0045893">
    <property type="term" value="P:positive regulation of DNA-templated transcription"/>
    <property type="evidence" value="ECO:0000314"/>
    <property type="project" value="UniProtKB"/>
</dbReference>
<dbReference type="GO" id="GO:0009737">
    <property type="term" value="P:response to abscisic acid"/>
    <property type="evidence" value="ECO:0000314"/>
    <property type="project" value="UniProtKB"/>
</dbReference>
<dbReference type="GO" id="GO:0009739">
    <property type="term" value="P:response to gibberellin"/>
    <property type="evidence" value="ECO:0000314"/>
    <property type="project" value="UniProtKB"/>
</dbReference>
<dbReference type="FunFam" id="2.20.25.80:FF:000006">
    <property type="entry name" value="WRKY transcription factor"/>
    <property type="match status" value="1"/>
</dbReference>
<dbReference type="FunFam" id="2.20.25.80:FF:000001">
    <property type="entry name" value="WRKY transcription factor 33"/>
    <property type="match status" value="1"/>
</dbReference>
<dbReference type="Gene3D" id="2.20.25.80">
    <property type="entry name" value="WRKY domain"/>
    <property type="match status" value="2"/>
</dbReference>
<dbReference type="InterPro" id="IPR003657">
    <property type="entry name" value="WRKY_dom"/>
</dbReference>
<dbReference type="InterPro" id="IPR036576">
    <property type="entry name" value="WRKY_dom_sf"/>
</dbReference>
<dbReference type="InterPro" id="IPR044810">
    <property type="entry name" value="WRKY_plant"/>
</dbReference>
<dbReference type="PANTHER" id="PTHR31221:SF1">
    <property type="entry name" value="WRKY TRANSCRIPTION FACTOR 33-RELATED"/>
    <property type="match status" value="1"/>
</dbReference>
<dbReference type="PANTHER" id="PTHR31221">
    <property type="entry name" value="WRKY TRANSCRIPTION FACTOR PROTEIN 1-RELATED"/>
    <property type="match status" value="1"/>
</dbReference>
<dbReference type="Pfam" id="PF03106">
    <property type="entry name" value="WRKY"/>
    <property type="match status" value="2"/>
</dbReference>
<dbReference type="SMART" id="SM00774">
    <property type="entry name" value="WRKY"/>
    <property type="match status" value="2"/>
</dbReference>
<dbReference type="SUPFAM" id="SSF118290">
    <property type="entry name" value="WRKY DNA-binding domain"/>
    <property type="match status" value="2"/>
</dbReference>
<dbReference type="PROSITE" id="PS50811">
    <property type="entry name" value="WRKY"/>
    <property type="match status" value="2"/>
</dbReference>